<dbReference type="EMBL" id="AE003852">
    <property type="protein sequence ID" value="AAF94258.1"/>
    <property type="status" value="ALT_INIT"/>
    <property type="molecule type" value="Genomic_DNA"/>
</dbReference>
<dbReference type="PIR" id="F82240">
    <property type="entry name" value="F82240"/>
</dbReference>
<dbReference type="RefSeq" id="NP_230744.1">
    <property type="nucleotide sequence ID" value="NC_002505.1"/>
</dbReference>
<dbReference type="STRING" id="243277.VC_1099"/>
<dbReference type="DNASU" id="2614369"/>
<dbReference type="EnsemblBacteria" id="AAF94258">
    <property type="protein sequence ID" value="AAF94258"/>
    <property type="gene ID" value="VC_1099"/>
</dbReference>
<dbReference type="KEGG" id="vch:VC_1099"/>
<dbReference type="PATRIC" id="fig|243277.26.peg.1049"/>
<dbReference type="eggNOG" id="COG3092">
    <property type="taxonomic scope" value="Bacteria"/>
</dbReference>
<dbReference type="HOGENOM" id="CLU_128746_0_0_6"/>
<dbReference type="Proteomes" id="UP000000584">
    <property type="component" value="Chromosome 1"/>
</dbReference>
<dbReference type="GO" id="GO:0005886">
    <property type="term" value="C:plasma membrane"/>
    <property type="evidence" value="ECO:0007669"/>
    <property type="project" value="UniProtKB-SubCell"/>
</dbReference>
<dbReference type="HAMAP" id="MF_01101">
    <property type="entry name" value="UPF0208"/>
    <property type="match status" value="1"/>
</dbReference>
<dbReference type="InterPro" id="IPR007334">
    <property type="entry name" value="UPF0208"/>
</dbReference>
<dbReference type="NCBIfam" id="NF002493">
    <property type="entry name" value="PRK01816.1"/>
    <property type="match status" value="1"/>
</dbReference>
<dbReference type="Pfam" id="PF04217">
    <property type="entry name" value="DUF412"/>
    <property type="match status" value="1"/>
</dbReference>
<reference key="1">
    <citation type="journal article" date="2000" name="Nature">
        <title>DNA sequence of both chromosomes of the cholera pathogen Vibrio cholerae.</title>
        <authorList>
            <person name="Heidelberg J.F."/>
            <person name="Eisen J.A."/>
            <person name="Nelson W.C."/>
            <person name="Clayton R.A."/>
            <person name="Gwinn M.L."/>
            <person name="Dodson R.J."/>
            <person name="Haft D.H."/>
            <person name="Hickey E.K."/>
            <person name="Peterson J.D."/>
            <person name="Umayam L.A."/>
            <person name="Gill S.R."/>
            <person name="Nelson K.E."/>
            <person name="Read T.D."/>
            <person name="Tettelin H."/>
            <person name="Richardson D.L."/>
            <person name="Ermolaeva M.D."/>
            <person name="Vamathevan J.J."/>
            <person name="Bass S."/>
            <person name="Qin H."/>
            <person name="Dragoi I."/>
            <person name="Sellers P."/>
            <person name="McDonald L.A."/>
            <person name="Utterback T.R."/>
            <person name="Fleischmann R.D."/>
            <person name="Nierman W.C."/>
            <person name="White O."/>
            <person name="Salzberg S.L."/>
            <person name="Smith H.O."/>
            <person name="Colwell R.R."/>
            <person name="Mekalanos J.J."/>
            <person name="Venter J.C."/>
            <person name="Fraser C.M."/>
        </authorList>
    </citation>
    <scope>NUCLEOTIDE SEQUENCE [LARGE SCALE GENOMIC DNA]</scope>
    <source>
        <strain>ATCC 39315 / El Tor Inaba N16961</strain>
    </source>
</reference>
<accession>Q9KT06</accession>
<protein>
    <recommendedName>
        <fullName evidence="1">UPF0208 membrane protein VC_1099</fullName>
    </recommendedName>
</protein>
<proteinExistence type="inferred from homology"/>
<keyword id="KW-0997">Cell inner membrane</keyword>
<keyword id="KW-1003">Cell membrane</keyword>
<keyword id="KW-0472">Membrane</keyword>
<keyword id="KW-1185">Reference proteome</keyword>
<keyword id="KW-0812">Transmembrane</keyword>
<keyword id="KW-1133">Transmembrane helix</keyword>
<name>Y1099_VIBCH</name>
<comment type="subcellular location">
    <subcellularLocation>
        <location evidence="1">Cell inner membrane</location>
        <topology evidence="1">Multi-pass membrane protein</topology>
    </subcellularLocation>
</comment>
<comment type="similarity">
    <text evidence="1">Belongs to the UPF0208 family.</text>
</comment>
<comment type="sequence caution" evidence="2">
    <conflict type="erroneous initiation">
        <sequence resource="EMBL-CDS" id="AAF94258"/>
    </conflict>
</comment>
<evidence type="ECO:0000255" key="1">
    <source>
        <dbReference type="HAMAP-Rule" id="MF_01101"/>
    </source>
</evidence>
<evidence type="ECO:0000305" key="2"/>
<sequence>MNNKVGIVHSLKDGQKYMDIWPMRKELNPLFPEQRVIKATRFAIKVMPAVAAISVLTQMVFANTQAMPQAIVVALFAMSLPLQGIWWLGHRANTQLPPALASWYRELYMKIVETGFALEPIKSKPRYKELAQVLNRAFRQLDDTALERWF</sequence>
<organism>
    <name type="scientific">Vibrio cholerae serotype O1 (strain ATCC 39315 / El Tor Inaba N16961)</name>
    <dbReference type="NCBI Taxonomy" id="243277"/>
    <lineage>
        <taxon>Bacteria</taxon>
        <taxon>Pseudomonadati</taxon>
        <taxon>Pseudomonadota</taxon>
        <taxon>Gammaproteobacteria</taxon>
        <taxon>Vibrionales</taxon>
        <taxon>Vibrionaceae</taxon>
        <taxon>Vibrio</taxon>
    </lineage>
</organism>
<gene>
    <name type="ordered locus">VC_1099</name>
</gene>
<feature type="chain" id="PRO_0000080824" description="UPF0208 membrane protein VC_1099">
    <location>
        <begin position="1"/>
        <end position="150"/>
    </location>
</feature>
<feature type="transmembrane region" description="Helical" evidence="1">
    <location>
        <begin position="42"/>
        <end position="62"/>
    </location>
</feature>
<feature type="transmembrane region" description="Helical" evidence="1">
    <location>
        <begin position="70"/>
        <end position="90"/>
    </location>
</feature>